<comment type="function">
    <text evidence="1">Involved in protein export.</text>
</comment>
<comment type="subunit">
    <text evidence="1">Part of the protein translocation apparatus. Forms a complex with SecD.</text>
</comment>
<comment type="subcellular location">
    <subcellularLocation>
        <location evidence="1">Cell membrane</location>
        <topology evidence="1">Multi-pass membrane protein</topology>
    </subcellularLocation>
</comment>
<comment type="similarity">
    <text evidence="1">Belongs to the SecD/SecF family. SecF subfamily.</text>
</comment>
<protein>
    <recommendedName>
        <fullName evidence="1">Protein-export membrane protein SecF</fullName>
    </recommendedName>
</protein>
<keyword id="KW-1003">Cell membrane</keyword>
<keyword id="KW-0472">Membrane</keyword>
<keyword id="KW-0653">Protein transport</keyword>
<keyword id="KW-1185">Reference proteome</keyword>
<keyword id="KW-0811">Translocation</keyword>
<keyword id="KW-0812">Transmembrane</keyword>
<keyword id="KW-1133">Transmembrane helix</keyword>
<keyword id="KW-0813">Transport</keyword>
<feature type="chain" id="PRO_0000412708" description="Protein-export membrane protein SecF">
    <location>
        <begin position="1"/>
        <end position="291"/>
    </location>
</feature>
<feature type="transmembrane region" description="Helical" evidence="1">
    <location>
        <begin position="19"/>
        <end position="39"/>
    </location>
</feature>
<feature type="transmembrane region" description="Helical" evidence="1">
    <location>
        <begin position="134"/>
        <end position="154"/>
    </location>
</feature>
<feature type="transmembrane region" description="Helical" evidence="1">
    <location>
        <begin position="156"/>
        <end position="176"/>
    </location>
</feature>
<feature type="transmembrane region" description="Helical" evidence="1">
    <location>
        <begin position="187"/>
        <end position="209"/>
    </location>
</feature>
<feature type="transmembrane region" description="Helical" evidence="1">
    <location>
        <begin position="226"/>
        <end position="246"/>
    </location>
</feature>
<feature type="transmembrane region" description="Helical" evidence="1">
    <location>
        <begin position="256"/>
        <end position="278"/>
    </location>
</feature>
<name>SECF_HALWD</name>
<gene>
    <name evidence="1" type="primary">secF</name>
    <name type="ordered locus">HQ_3098A</name>
</gene>
<sequence length="291" mass="30991">MAEFTVPEVDYTRYSNYQLVVIPLIILAVALLIIASWYVLTGSPVTQGIAFTGGTEITVETDGATTTQIVEAFSVEPESVQAVPTANTYIVTFQSNGNSGVAVTDLTRQAEQAGFEVQSAYEVSPSFGATTQTLALGGVGVAFLGMSVLVFLMFRVFVPSIAVVVSAFSDIAISVALMNVLGIELSLGTVAALLMIIGYSVDSDILLNNHVLRRSGDFYESTYRAMRTGVTMTLTSIIAMSVMAAVATAFGIQLLAAIGTVLVFGLIADLMNTYLLNLSLLRWYKFKGVAR</sequence>
<accession>Q18FQ7</accession>
<dbReference type="EMBL" id="AM180088">
    <property type="protein sequence ID" value="CAJ53198.1"/>
    <property type="molecule type" value="Genomic_DNA"/>
</dbReference>
<dbReference type="RefSeq" id="WP_011572305.1">
    <property type="nucleotide sequence ID" value="NC_008212.1"/>
</dbReference>
<dbReference type="SMR" id="Q18FQ7"/>
<dbReference type="STRING" id="362976.HQ_3098A"/>
<dbReference type="GeneID" id="4194685"/>
<dbReference type="KEGG" id="hwa:HQ_3098A"/>
<dbReference type="eggNOG" id="arCOG03054">
    <property type="taxonomic scope" value="Archaea"/>
</dbReference>
<dbReference type="HOGENOM" id="CLU_060478_0_0_2"/>
<dbReference type="Proteomes" id="UP000001975">
    <property type="component" value="Chromosome"/>
</dbReference>
<dbReference type="GO" id="GO:0005886">
    <property type="term" value="C:plasma membrane"/>
    <property type="evidence" value="ECO:0007669"/>
    <property type="project" value="UniProtKB-SubCell"/>
</dbReference>
<dbReference type="GO" id="GO:0065002">
    <property type="term" value="P:intracellular protein transmembrane transport"/>
    <property type="evidence" value="ECO:0007669"/>
    <property type="project" value="UniProtKB-UniRule"/>
</dbReference>
<dbReference type="GO" id="GO:0006605">
    <property type="term" value="P:protein targeting"/>
    <property type="evidence" value="ECO:0007669"/>
    <property type="project" value="UniProtKB-UniRule"/>
</dbReference>
<dbReference type="Gene3D" id="1.20.1640.10">
    <property type="entry name" value="Multidrug efflux transporter AcrB transmembrane domain"/>
    <property type="match status" value="1"/>
</dbReference>
<dbReference type="HAMAP" id="MF_01464_A">
    <property type="entry name" value="SecF_A"/>
    <property type="match status" value="1"/>
</dbReference>
<dbReference type="InterPro" id="IPR022813">
    <property type="entry name" value="SecD/SecF_arch_bac"/>
</dbReference>
<dbReference type="InterPro" id="IPR053476">
    <property type="entry name" value="SecD/SecF_export"/>
</dbReference>
<dbReference type="InterPro" id="IPR048634">
    <property type="entry name" value="SecD_SecF_C"/>
</dbReference>
<dbReference type="InterPro" id="IPR024921">
    <property type="entry name" value="SecF_arc"/>
</dbReference>
<dbReference type="NCBIfam" id="NF006355">
    <property type="entry name" value="PRK08578.1-3"/>
    <property type="match status" value="1"/>
</dbReference>
<dbReference type="NCBIfam" id="NF041305">
    <property type="entry name" value="SecF_Halo"/>
    <property type="match status" value="1"/>
</dbReference>
<dbReference type="PANTHER" id="PTHR30081:SF8">
    <property type="entry name" value="PROTEIN TRANSLOCASE SUBUNIT SECF"/>
    <property type="match status" value="1"/>
</dbReference>
<dbReference type="PANTHER" id="PTHR30081">
    <property type="entry name" value="PROTEIN-EXPORT MEMBRANE PROTEIN SEC"/>
    <property type="match status" value="1"/>
</dbReference>
<dbReference type="Pfam" id="PF02355">
    <property type="entry name" value="SecD_SecF_C"/>
    <property type="match status" value="1"/>
</dbReference>
<dbReference type="SUPFAM" id="SSF82866">
    <property type="entry name" value="Multidrug efflux transporter AcrB transmembrane domain"/>
    <property type="match status" value="1"/>
</dbReference>
<evidence type="ECO:0000255" key="1">
    <source>
        <dbReference type="HAMAP-Rule" id="MF_01464"/>
    </source>
</evidence>
<reference key="1">
    <citation type="journal article" date="2006" name="BMC Genomics">
        <title>The genome of the square archaeon Haloquadratum walsbyi: life at the limits of water activity.</title>
        <authorList>
            <person name="Bolhuis H."/>
            <person name="Palm P."/>
            <person name="Wende A."/>
            <person name="Falb M."/>
            <person name="Rampp M."/>
            <person name="Rodriguez-Valera F."/>
            <person name="Pfeiffer F."/>
            <person name="Oesterhelt D."/>
        </authorList>
    </citation>
    <scope>NUCLEOTIDE SEQUENCE [LARGE SCALE GENOMIC DNA]</scope>
    <source>
        <strain>DSM 16790 / HBSQ001</strain>
    </source>
</reference>
<organism>
    <name type="scientific">Haloquadratum walsbyi (strain DSM 16790 / HBSQ001)</name>
    <dbReference type="NCBI Taxonomy" id="362976"/>
    <lineage>
        <taxon>Archaea</taxon>
        <taxon>Methanobacteriati</taxon>
        <taxon>Methanobacteriota</taxon>
        <taxon>Stenosarchaea group</taxon>
        <taxon>Halobacteria</taxon>
        <taxon>Halobacteriales</taxon>
        <taxon>Haloferacaceae</taxon>
        <taxon>Haloquadratum</taxon>
    </lineage>
</organism>
<proteinExistence type="inferred from homology"/>